<comment type="function">
    <text evidence="1">IGPS catalyzes the conversion of PRFAR and glutamine to IGP, AICAR and glutamate. The HisH subunit catalyzes the hydrolysis of glutamine to glutamate and ammonia as part of the synthesis of IGP and AICAR. The resulting ammonia molecule is channeled to the active site of HisF.</text>
</comment>
<comment type="catalytic activity">
    <reaction evidence="1">
        <text>5-[(5-phospho-1-deoxy-D-ribulos-1-ylimino)methylamino]-1-(5-phospho-beta-D-ribosyl)imidazole-4-carboxamide + L-glutamine = D-erythro-1-(imidazol-4-yl)glycerol 3-phosphate + 5-amino-1-(5-phospho-beta-D-ribosyl)imidazole-4-carboxamide + L-glutamate + H(+)</text>
        <dbReference type="Rhea" id="RHEA:24793"/>
        <dbReference type="ChEBI" id="CHEBI:15378"/>
        <dbReference type="ChEBI" id="CHEBI:29985"/>
        <dbReference type="ChEBI" id="CHEBI:58278"/>
        <dbReference type="ChEBI" id="CHEBI:58359"/>
        <dbReference type="ChEBI" id="CHEBI:58475"/>
        <dbReference type="ChEBI" id="CHEBI:58525"/>
        <dbReference type="EC" id="4.3.2.10"/>
    </reaction>
</comment>
<comment type="catalytic activity">
    <reaction evidence="1">
        <text>L-glutamine + H2O = L-glutamate + NH4(+)</text>
        <dbReference type="Rhea" id="RHEA:15889"/>
        <dbReference type="ChEBI" id="CHEBI:15377"/>
        <dbReference type="ChEBI" id="CHEBI:28938"/>
        <dbReference type="ChEBI" id="CHEBI:29985"/>
        <dbReference type="ChEBI" id="CHEBI:58359"/>
        <dbReference type="EC" id="3.5.1.2"/>
    </reaction>
</comment>
<comment type="pathway">
    <text evidence="1">Amino-acid biosynthesis; L-histidine biosynthesis; L-histidine from 5-phospho-alpha-D-ribose 1-diphosphate: step 5/9.</text>
</comment>
<comment type="subunit">
    <text evidence="1">Heterodimer of HisH and HisF.</text>
</comment>
<comment type="subcellular location">
    <subcellularLocation>
        <location evidence="1">Cytoplasm</location>
    </subcellularLocation>
</comment>
<name>HIS5_PHOLL</name>
<proteinExistence type="inferred from homology"/>
<organism>
    <name type="scientific">Photorhabdus laumondii subsp. laumondii (strain DSM 15139 / CIP 105565 / TT01)</name>
    <name type="common">Photorhabdus luminescens subsp. laumondii</name>
    <dbReference type="NCBI Taxonomy" id="243265"/>
    <lineage>
        <taxon>Bacteria</taxon>
        <taxon>Pseudomonadati</taxon>
        <taxon>Pseudomonadota</taxon>
        <taxon>Gammaproteobacteria</taxon>
        <taxon>Enterobacterales</taxon>
        <taxon>Morganellaceae</taxon>
        <taxon>Photorhabdus</taxon>
    </lineage>
</organism>
<dbReference type="EC" id="4.3.2.10" evidence="1"/>
<dbReference type="EC" id="3.5.1.2" evidence="1"/>
<dbReference type="EMBL" id="BX571864">
    <property type="protein sequence ID" value="CAE13860.1"/>
    <property type="molecule type" value="Genomic_DNA"/>
</dbReference>
<dbReference type="RefSeq" id="WP_011145864.1">
    <property type="nucleotide sequence ID" value="NC_005126.1"/>
</dbReference>
<dbReference type="SMR" id="Q7N6I3"/>
<dbReference type="STRING" id="243265.plu1567"/>
<dbReference type="MEROPS" id="C26.965"/>
<dbReference type="GeneID" id="48847854"/>
<dbReference type="KEGG" id="plu:plu1567"/>
<dbReference type="eggNOG" id="COG0118">
    <property type="taxonomic scope" value="Bacteria"/>
</dbReference>
<dbReference type="HOGENOM" id="CLU_071837_0_0_6"/>
<dbReference type="OrthoDB" id="9807137at2"/>
<dbReference type="UniPathway" id="UPA00031">
    <property type="reaction ID" value="UER00010"/>
</dbReference>
<dbReference type="Proteomes" id="UP000002514">
    <property type="component" value="Chromosome"/>
</dbReference>
<dbReference type="GO" id="GO:0005737">
    <property type="term" value="C:cytoplasm"/>
    <property type="evidence" value="ECO:0007669"/>
    <property type="project" value="UniProtKB-SubCell"/>
</dbReference>
<dbReference type="GO" id="GO:0004359">
    <property type="term" value="F:glutaminase activity"/>
    <property type="evidence" value="ECO:0007669"/>
    <property type="project" value="UniProtKB-EC"/>
</dbReference>
<dbReference type="GO" id="GO:0000107">
    <property type="term" value="F:imidazoleglycerol-phosphate synthase activity"/>
    <property type="evidence" value="ECO:0007669"/>
    <property type="project" value="UniProtKB-UniRule"/>
</dbReference>
<dbReference type="GO" id="GO:0016829">
    <property type="term" value="F:lyase activity"/>
    <property type="evidence" value="ECO:0007669"/>
    <property type="project" value="UniProtKB-KW"/>
</dbReference>
<dbReference type="GO" id="GO:0000105">
    <property type="term" value="P:L-histidine biosynthetic process"/>
    <property type="evidence" value="ECO:0007669"/>
    <property type="project" value="UniProtKB-UniRule"/>
</dbReference>
<dbReference type="CDD" id="cd01748">
    <property type="entry name" value="GATase1_IGP_Synthase"/>
    <property type="match status" value="1"/>
</dbReference>
<dbReference type="FunFam" id="3.40.50.880:FF:000009">
    <property type="entry name" value="Imidazole glycerol phosphate synthase subunit HisH"/>
    <property type="match status" value="1"/>
</dbReference>
<dbReference type="Gene3D" id="3.40.50.880">
    <property type="match status" value="1"/>
</dbReference>
<dbReference type="HAMAP" id="MF_00278">
    <property type="entry name" value="HisH"/>
    <property type="match status" value="1"/>
</dbReference>
<dbReference type="InterPro" id="IPR029062">
    <property type="entry name" value="Class_I_gatase-like"/>
</dbReference>
<dbReference type="InterPro" id="IPR017926">
    <property type="entry name" value="GATASE"/>
</dbReference>
<dbReference type="InterPro" id="IPR010139">
    <property type="entry name" value="Imidazole-glycPsynth_HisH"/>
</dbReference>
<dbReference type="NCBIfam" id="TIGR01855">
    <property type="entry name" value="IMP_synth_hisH"/>
    <property type="match status" value="1"/>
</dbReference>
<dbReference type="PANTHER" id="PTHR42701">
    <property type="entry name" value="IMIDAZOLE GLYCEROL PHOSPHATE SYNTHASE SUBUNIT HISH"/>
    <property type="match status" value="1"/>
</dbReference>
<dbReference type="PANTHER" id="PTHR42701:SF1">
    <property type="entry name" value="IMIDAZOLE GLYCEROL PHOSPHATE SYNTHASE SUBUNIT HISH"/>
    <property type="match status" value="1"/>
</dbReference>
<dbReference type="Pfam" id="PF00117">
    <property type="entry name" value="GATase"/>
    <property type="match status" value="1"/>
</dbReference>
<dbReference type="PIRSF" id="PIRSF000495">
    <property type="entry name" value="Amidotransf_hisH"/>
    <property type="match status" value="1"/>
</dbReference>
<dbReference type="SUPFAM" id="SSF52317">
    <property type="entry name" value="Class I glutamine amidotransferase-like"/>
    <property type="match status" value="1"/>
</dbReference>
<dbReference type="PROSITE" id="PS51273">
    <property type="entry name" value="GATASE_TYPE_1"/>
    <property type="match status" value="1"/>
</dbReference>
<reference key="1">
    <citation type="journal article" date="2003" name="Nat. Biotechnol.">
        <title>The genome sequence of the entomopathogenic bacterium Photorhabdus luminescens.</title>
        <authorList>
            <person name="Duchaud E."/>
            <person name="Rusniok C."/>
            <person name="Frangeul L."/>
            <person name="Buchrieser C."/>
            <person name="Givaudan A."/>
            <person name="Taourit S."/>
            <person name="Bocs S."/>
            <person name="Boursaux-Eude C."/>
            <person name="Chandler M."/>
            <person name="Charles J.-F."/>
            <person name="Dassa E."/>
            <person name="Derose R."/>
            <person name="Derzelle S."/>
            <person name="Freyssinet G."/>
            <person name="Gaudriault S."/>
            <person name="Medigue C."/>
            <person name="Lanois A."/>
            <person name="Powell K."/>
            <person name="Siguier P."/>
            <person name="Vincent R."/>
            <person name="Wingate V."/>
            <person name="Zouine M."/>
            <person name="Glaser P."/>
            <person name="Boemare N."/>
            <person name="Danchin A."/>
            <person name="Kunst F."/>
        </authorList>
    </citation>
    <scope>NUCLEOTIDE SEQUENCE [LARGE SCALE GENOMIC DNA]</scope>
    <source>
        <strain>DSM 15139 / CIP 105565 / TT01</strain>
    </source>
</reference>
<keyword id="KW-0028">Amino-acid biosynthesis</keyword>
<keyword id="KW-0963">Cytoplasm</keyword>
<keyword id="KW-0315">Glutamine amidotransferase</keyword>
<keyword id="KW-0368">Histidine biosynthesis</keyword>
<keyword id="KW-0378">Hydrolase</keyword>
<keyword id="KW-0456">Lyase</keyword>
<keyword id="KW-1185">Reference proteome</keyword>
<accession>Q7N6I3</accession>
<sequence>MKVVILDTGCANLSSVTYAIRKLGYQPEISQETATILAADKLLLPGVGTASAAMDQLKQRELIPLIKVLSQPVLGICLGMQLFAATSEESDNVAGNNVTLLEVMASPVQKMATHGLPLPHMGWNQVLPKAGHPLFRGIEDHAYFYFVHSYAIPLNTYTIAQTEYGNIFSSAIAKDNFFGVQFHPERSGAAGARLLKNFLEM</sequence>
<feature type="chain" id="PRO_0000152402" description="Imidazole glycerol phosphate synthase subunit HisH">
    <location>
        <begin position="1"/>
        <end position="201"/>
    </location>
</feature>
<feature type="domain" description="Glutamine amidotransferase type-1" evidence="1">
    <location>
        <begin position="2"/>
        <end position="201"/>
    </location>
</feature>
<feature type="active site" description="Nucleophile" evidence="1">
    <location>
        <position position="77"/>
    </location>
</feature>
<feature type="active site" evidence="1">
    <location>
        <position position="183"/>
    </location>
</feature>
<feature type="active site" evidence="1">
    <location>
        <position position="185"/>
    </location>
</feature>
<protein>
    <recommendedName>
        <fullName evidence="1">Imidazole glycerol phosphate synthase subunit HisH</fullName>
        <ecNumber evidence="1">4.3.2.10</ecNumber>
    </recommendedName>
    <alternativeName>
        <fullName evidence="1">IGP synthase glutaminase subunit</fullName>
        <ecNumber evidence="1">3.5.1.2</ecNumber>
    </alternativeName>
    <alternativeName>
        <fullName evidence="1">IGP synthase subunit HisH</fullName>
    </alternativeName>
    <alternativeName>
        <fullName evidence="1">ImGP synthase subunit HisH</fullName>
        <shortName evidence="1">IGPS subunit HisH</shortName>
    </alternativeName>
</protein>
<evidence type="ECO:0000255" key="1">
    <source>
        <dbReference type="HAMAP-Rule" id="MF_00278"/>
    </source>
</evidence>
<gene>
    <name evidence="1" type="primary">hisH</name>
    <name type="ordered locus">plu1567</name>
</gene>